<dbReference type="EC" id="7.1.1.-" evidence="1"/>
<dbReference type="EMBL" id="CR522870">
    <property type="protein sequence ID" value="CAG36047.1"/>
    <property type="molecule type" value="Genomic_DNA"/>
</dbReference>
<dbReference type="RefSeq" id="WP_011188559.1">
    <property type="nucleotide sequence ID" value="NC_006138.1"/>
</dbReference>
<dbReference type="SMR" id="Q6ANM7"/>
<dbReference type="STRING" id="177439.DP1318"/>
<dbReference type="KEGG" id="dps:DP1318"/>
<dbReference type="eggNOG" id="COG0649">
    <property type="taxonomic scope" value="Bacteria"/>
</dbReference>
<dbReference type="HOGENOM" id="CLU_015134_1_2_7"/>
<dbReference type="OrthoDB" id="9801496at2"/>
<dbReference type="Proteomes" id="UP000000602">
    <property type="component" value="Chromosome"/>
</dbReference>
<dbReference type="GO" id="GO:0005886">
    <property type="term" value="C:plasma membrane"/>
    <property type="evidence" value="ECO:0007669"/>
    <property type="project" value="UniProtKB-SubCell"/>
</dbReference>
<dbReference type="GO" id="GO:0051287">
    <property type="term" value="F:NAD binding"/>
    <property type="evidence" value="ECO:0007669"/>
    <property type="project" value="InterPro"/>
</dbReference>
<dbReference type="GO" id="GO:0050136">
    <property type="term" value="F:NADH:ubiquinone reductase (non-electrogenic) activity"/>
    <property type="evidence" value="ECO:0007669"/>
    <property type="project" value="UniProtKB-UniRule"/>
</dbReference>
<dbReference type="GO" id="GO:0048038">
    <property type="term" value="F:quinone binding"/>
    <property type="evidence" value="ECO:0007669"/>
    <property type="project" value="UniProtKB-KW"/>
</dbReference>
<dbReference type="Gene3D" id="1.10.645.10">
    <property type="entry name" value="Cytochrome-c3 Hydrogenase, chain B"/>
    <property type="match status" value="1"/>
</dbReference>
<dbReference type="HAMAP" id="MF_01358">
    <property type="entry name" value="NDH1_NuoD"/>
    <property type="match status" value="1"/>
</dbReference>
<dbReference type="InterPro" id="IPR001135">
    <property type="entry name" value="NADH_Q_OxRdtase_suD"/>
</dbReference>
<dbReference type="InterPro" id="IPR022885">
    <property type="entry name" value="NDH1_su_D/H"/>
</dbReference>
<dbReference type="InterPro" id="IPR029014">
    <property type="entry name" value="NiFe-Hase_large"/>
</dbReference>
<dbReference type="NCBIfam" id="NF004739">
    <property type="entry name" value="PRK06075.1"/>
    <property type="match status" value="1"/>
</dbReference>
<dbReference type="PANTHER" id="PTHR11993:SF10">
    <property type="entry name" value="NADH DEHYDROGENASE [UBIQUINONE] IRON-SULFUR PROTEIN 2, MITOCHONDRIAL"/>
    <property type="match status" value="1"/>
</dbReference>
<dbReference type="PANTHER" id="PTHR11993">
    <property type="entry name" value="NADH-UBIQUINONE OXIDOREDUCTASE 49 KDA SUBUNIT"/>
    <property type="match status" value="1"/>
</dbReference>
<dbReference type="Pfam" id="PF00346">
    <property type="entry name" value="Complex1_49kDa"/>
    <property type="match status" value="1"/>
</dbReference>
<dbReference type="SUPFAM" id="SSF56762">
    <property type="entry name" value="HydB/Nqo4-like"/>
    <property type="match status" value="1"/>
</dbReference>
<reference key="1">
    <citation type="journal article" date="2004" name="Environ. Microbiol.">
        <title>The genome of Desulfotalea psychrophila, a sulfate-reducing bacterium from permanently cold Arctic sediments.</title>
        <authorList>
            <person name="Rabus R."/>
            <person name="Ruepp A."/>
            <person name="Frickey T."/>
            <person name="Rattei T."/>
            <person name="Fartmann B."/>
            <person name="Stark M."/>
            <person name="Bauer M."/>
            <person name="Zibat A."/>
            <person name="Lombardot T."/>
            <person name="Becker I."/>
            <person name="Amann J."/>
            <person name="Gellner K."/>
            <person name="Teeling H."/>
            <person name="Leuschner W.D."/>
            <person name="Gloeckner F.-O."/>
            <person name="Lupas A.N."/>
            <person name="Amann R."/>
            <person name="Klenk H.-P."/>
        </authorList>
    </citation>
    <scope>NUCLEOTIDE SEQUENCE [LARGE SCALE GENOMIC DNA]</scope>
    <source>
        <strain>DSM 12343 / LSv54</strain>
    </source>
</reference>
<gene>
    <name evidence="1" type="primary">nuoD</name>
    <name type="ordered locus">DP1318</name>
</gene>
<organism>
    <name type="scientific">Desulfotalea psychrophila (strain LSv54 / DSM 12343)</name>
    <dbReference type="NCBI Taxonomy" id="177439"/>
    <lineage>
        <taxon>Bacteria</taxon>
        <taxon>Pseudomonadati</taxon>
        <taxon>Thermodesulfobacteriota</taxon>
        <taxon>Desulfobulbia</taxon>
        <taxon>Desulfobulbales</taxon>
        <taxon>Desulfocapsaceae</taxon>
        <taxon>Desulfotalea</taxon>
    </lineage>
</organism>
<keyword id="KW-0997">Cell inner membrane</keyword>
<keyword id="KW-1003">Cell membrane</keyword>
<keyword id="KW-0472">Membrane</keyword>
<keyword id="KW-0520">NAD</keyword>
<keyword id="KW-0874">Quinone</keyword>
<keyword id="KW-1185">Reference proteome</keyword>
<keyword id="KW-1278">Translocase</keyword>
<keyword id="KW-0813">Transport</keyword>
<keyword id="KW-0830">Ubiquinone</keyword>
<accession>Q6ANM7</accession>
<evidence type="ECO:0000255" key="1">
    <source>
        <dbReference type="HAMAP-Rule" id="MF_01358"/>
    </source>
</evidence>
<proteinExistence type="inferred from homology"/>
<name>NUOD_DESPS</name>
<feature type="chain" id="PRO_0000357807" description="NADH-quinone oxidoreductase subunit D">
    <location>
        <begin position="1"/>
        <end position="372"/>
    </location>
</feature>
<sequence length="372" mass="42527">MSEHIILNPDETFTLNLGPQHPATHGVLRVKLTMDGEYIYSAETVIGYIHRMHEKMGENRTYNQYLPNLSRLDYLSAMAYCHGYVLAVEKAGSIEVPERAEYIRAITVELNRLSSHLVWFGAFIMDLGGFSPLMYAFDDREQILDLLESITGSRLTYCYYRFGGLYNDIDDEFLVGTRKFIIRMRKSLKTYRDLVTNNIILMKRLKDIGHISPEICRKYGATGPVARGSGINFDVRKNEPYSVYNEFDFDIPVYHEGDSYARYMVRMDEMEQSLRIIEQAMDKLPGGPIIPEKKPKIIKLPEGDYYSTVEAARGSFGIRLVSDGGKNAYRLKLRSPTFSNMHLFDEVCQGMLIADALALMGSLDLVIPEIDR</sequence>
<comment type="function">
    <text evidence="1">NDH-1 shuttles electrons from NADH, via FMN and iron-sulfur (Fe-S) centers, to quinones in the respiratory chain. The immediate electron acceptor for the enzyme in this species is believed to be ubiquinone. Couples the redox reaction to proton translocation (for every two electrons transferred, four hydrogen ions are translocated across the cytoplasmic membrane), and thus conserves the redox energy in a proton gradient.</text>
</comment>
<comment type="catalytic activity">
    <reaction evidence="1">
        <text>a quinone + NADH + 5 H(+)(in) = a quinol + NAD(+) + 4 H(+)(out)</text>
        <dbReference type="Rhea" id="RHEA:57888"/>
        <dbReference type="ChEBI" id="CHEBI:15378"/>
        <dbReference type="ChEBI" id="CHEBI:24646"/>
        <dbReference type="ChEBI" id="CHEBI:57540"/>
        <dbReference type="ChEBI" id="CHEBI:57945"/>
        <dbReference type="ChEBI" id="CHEBI:132124"/>
    </reaction>
</comment>
<comment type="subunit">
    <text evidence="1">NDH-1 is composed of 14 different subunits. Subunits NuoB, C, D, E, F, and G constitute the peripheral sector of the complex.</text>
</comment>
<comment type="subcellular location">
    <subcellularLocation>
        <location evidence="1">Cell inner membrane</location>
        <topology evidence="1">Peripheral membrane protein</topology>
        <orientation evidence="1">Cytoplasmic side</orientation>
    </subcellularLocation>
</comment>
<comment type="similarity">
    <text evidence="1">Belongs to the complex I 49 kDa subunit family.</text>
</comment>
<protein>
    <recommendedName>
        <fullName evidence="1">NADH-quinone oxidoreductase subunit D</fullName>
        <ecNumber evidence="1">7.1.1.-</ecNumber>
    </recommendedName>
    <alternativeName>
        <fullName evidence="1">NADH dehydrogenase I subunit D</fullName>
    </alternativeName>
    <alternativeName>
        <fullName evidence="1">NDH-1 subunit D</fullName>
    </alternativeName>
</protein>